<accession>P19708</accession>
<comment type="function">
    <text>Major acute phase reactant. Apolipoprotein of the HDL complex.</text>
</comment>
<comment type="subcellular location">
    <subcellularLocation>
        <location>Secreted</location>
    </subcellularLocation>
</comment>
<comment type="tissue specificity">
    <text>Expressed by the liver; secreted in plasma.</text>
</comment>
<comment type="induction">
    <text>Upon cytokine stimulation.</text>
</comment>
<comment type="PTM">
    <text>This protein is the precursor of amyloid protein A, which is formed by the removal of residues from the C-terminal end.</text>
</comment>
<comment type="disease">
    <text>Reactive, secondary amyloidosis is characterized by the extracellular accumulation in various tissues of the SAA protein. These deposits are highly insoluble and resistant to proteolysis; they disrupt tissue structure and compromise function.</text>
</comment>
<comment type="similarity">
    <text evidence="4">Belongs to the SAA family.</text>
</comment>
<dbReference type="EMBL" id="M59171">
    <property type="protein sequence ID" value="AAA62762.1"/>
    <property type="molecule type" value="mRNA"/>
</dbReference>
<dbReference type="EMBL" id="M59172">
    <property type="protein sequence ID" value="AAA62763.1"/>
    <property type="molecule type" value="mRNA"/>
</dbReference>
<dbReference type="EMBL" id="M59173">
    <property type="protein sequence ID" value="AAA62764.1"/>
    <property type="molecule type" value="mRNA"/>
</dbReference>
<dbReference type="EMBL" id="M59174">
    <property type="protein sequence ID" value="AAA62765.1"/>
    <property type="molecule type" value="mRNA"/>
</dbReference>
<dbReference type="EMBL" id="M59175">
    <property type="protein sequence ID" value="AAA51457.1"/>
    <property type="molecule type" value="mRNA"/>
</dbReference>
<dbReference type="PIR" id="A38645">
    <property type="entry name" value="YLDGA"/>
</dbReference>
<dbReference type="PIR" id="B38645">
    <property type="entry name" value="B38645"/>
</dbReference>
<dbReference type="PIR" id="C38645">
    <property type="entry name" value="C38645"/>
</dbReference>
<dbReference type="PIR" id="D38645">
    <property type="entry name" value="D38645"/>
</dbReference>
<dbReference type="PIR" id="E38645">
    <property type="entry name" value="E38645"/>
</dbReference>
<dbReference type="RefSeq" id="NP_001300801.1">
    <property type="nucleotide sequence ID" value="NM_001313872.1"/>
</dbReference>
<dbReference type="RefSeq" id="XP_005633787.1">
    <property type="nucleotide sequence ID" value="XM_005633730.2"/>
</dbReference>
<dbReference type="SMR" id="P19708"/>
<dbReference type="FunCoup" id="P19708">
    <property type="interactions" value="21"/>
</dbReference>
<dbReference type="STRING" id="9615.ENSCAFP00000013430"/>
<dbReference type="PaxDb" id="9612-ENSCAFP00000013464"/>
<dbReference type="Ensembl" id="ENSCAFT00000014555.5">
    <property type="protein sequence ID" value="ENSCAFP00000013464.3"/>
    <property type="gene ID" value="ENSCAFG00000015205.5"/>
</dbReference>
<dbReference type="Ensembl" id="ENSCAFT00845027545.1">
    <property type="protein sequence ID" value="ENSCAFP00845021672.1"/>
    <property type="gene ID" value="ENSCAFG00845015397.1"/>
</dbReference>
<dbReference type="KEGG" id="cfa:403585"/>
<dbReference type="KEGG" id="cfa:751814"/>
<dbReference type="VEuPathDB" id="HostDB:ENSCAFG00845015397"/>
<dbReference type="eggNOG" id="ENOG502S4PB">
    <property type="taxonomic scope" value="Eukaryota"/>
</dbReference>
<dbReference type="GeneTree" id="ENSGT00390000004737"/>
<dbReference type="HOGENOM" id="CLU_129936_0_0_1"/>
<dbReference type="InParanoid" id="P19708"/>
<dbReference type="OMA" id="RLWVCIA"/>
<dbReference type="OrthoDB" id="1230at33554"/>
<dbReference type="TreeFam" id="TF332544"/>
<dbReference type="Proteomes" id="UP000002254">
    <property type="component" value="Chromosome 21"/>
</dbReference>
<dbReference type="Proteomes" id="UP000694429">
    <property type="component" value="Unplaced"/>
</dbReference>
<dbReference type="Proteomes" id="UP000694542">
    <property type="component" value="Unplaced"/>
</dbReference>
<dbReference type="Proteomes" id="UP000805418">
    <property type="component" value="Chromosome 21"/>
</dbReference>
<dbReference type="Bgee" id="ENSCAFG00000015205">
    <property type="expression patterns" value="Expressed in retina and 46 other cell types or tissues"/>
</dbReference>
<dbReference type="GO" id="GO:0034364">
    <property type="term" value="C:high-density lipoprotein particle"/>
    <property type="evidence" value="ECO:0007669"/>
    <property type="project" value="UniProtKB-KW"/>
</dbReference>
<dbReference type="GO" id="GO:0006953">
    <property type="term" value="P:acute-phase response"/>
    <property type="evidence" value="ECO:0007669"/>
    <property type="project" value="UniProtKB-KW"/>
</dbReference>
<dbReference type="FunFam" id="1.10.132.110:FF:000001">
    <property type="entry name" value="Serum amyloid A protein"/>
    <property type="match status" value="1"/>
</dbReference>
<dbReference type="Gene3D" id="1.10.132.110">
    <property type="entry name" value="Serum amyloid A protein"/>
    <property type="match status" value="1"/>
</dbReference>
<dbReference type="InterPro" id="IPR000096">
    <property type="entry name" value="Serum_amyloid_A"/>
</dbReference>
<dbReference type="InterPro" id="IPR052464">
    <property type="entry name" value="Synovial_Prolif_Regulator"/>
</dbReference>
<dbReference type="PANTHER" id="PTHR23424">
    <property type="entry name" value="SERUM AMYLOID A"/>
    <property type="match status" value="1"/>
</dbReference>
<dbReference type="PANTHER" id="PTHR23424:SF29">
    <property type="entry name" value="SERUM AMYLOID A PROTEIN"/>
    <property type="match status" value="1"/>
</dbReference>
<dbReference type="Pfam" id="PF00277">
    <property type="entry name" value="SAA"/>
    <property type="match status" value="1"/>
</dbReference>
<dbReference type="PIRSF" id="PIRSF002472">
    <property type="entry name" value="Serum_amyloid_A"/>
    <property type="match status" value="1"/>
</dbReference>
<dbReference type="PRINTS" id="PR00306">
    <property type="entry name" value="SERUMAMYLOID"/>
</dbReference>
<dbReference type="SMART" id="SM00197">
    <property type="entry name" value="SAA"/>
    <property type="match status" value="1"/>
</dbReference>
<dbReference type="PROSITE" id="PS00992">
    <property type="entry name" value="SAA"/>
    <property type="match status" value="1"/>
</dbReference>
<reference key="1">
    <citation type="journal article" date="1991" name="J. Biol. Chem.">
        <title>Dog serum amyloid A protein. Identification of multiple isoforms defined by cDNA and protein analyses.</title>
        <authorList>
            <person name="Sellar G.C."/>
            <person name="Debeer M.C."/>
            <person name="Lelias J.M."/>
            <person name="Snyder P.W."/>
            <person name="Glickman L.T."/>
            <person name="Felsburg P.J."/>
            <person name="Whitehead A.S."/>
        </authorList>
    </citation>
    <scope>NUCLEOTIDE SEQUENCE [MRNA]</scope>
</reference>
<reference key="2">
    <citation type="journal article" date="1989" name="Comp. Biochem. Physiol.">
        <title>Primary structures of dog and cat amyloid A proteins: comparison to human AA.</title>
        <authorList>
            <person name="Kluve-Beckerman B."/>
            <person name="Dwulet F.E."/>
            <person name="Dibartola S.P."/>
            <person name="Benson M.D."/>
        </authorList>
    </citation>
    <scope>PROTEIN SEQUENCE OF 19-111</scope>
</reference>
<gene>
    <name type="primary">SAA1</name>
</gene>
<protein>
    <recommendedName>
        <fullName>Serum amyloid A protein</fullName>
        <shortName>SAA</shortName>
    </recommendedName>
    <component>
        <recommendedName>
            <fullName>Amyloid protein A</fullName>
        </recommendedName>
        <alternativeName>
            <fullName>Amyloid fibril protein AA</fullName>
        </alternativeName>
    </component>
</protein>
<feature type="signal peptide" evidence="3">
    <location>
        <begin position="1"/>
        <end position="18"/>
    </location>
</feature>
<feature type="chain" id="PRO_0000031570" description="Serum amyloid A protein">
    <location>
        <begin position="19"/>
        <end position="129"/>
    </location>
</feature>
<feature type="chain" id="PRO_0000031571" description="Amyloid protein A">
    <location>
        <begin position="19"/>
        <end position="111"/>
    </location>
</feature>
<feature type="propeptide" id="PRO_0000031572" description="Often cleaved during amyloidogenesis">
    <location>
        <begin position="112"/>
        <end position="129"/>
    </location>
</feature>
<feature type="region of interest" description="Disordered" evidence="2">
    <location>
        <begin position="92"/>
        <end position="129"/>
    </location>
</feature>
<feature type="modified residue" description="Pyrrolidone carboxylic acid" evidence="1">
    <location>
        <position position="19"/>
    </location>
</feature>
<feature type="sequence variant">
    <original>S</original>
    <variation>G</variation>
    <location>
        <position position="25"/>
    </location>
</feature>
<feature type="sequence variant">
    <original>W</original>
    <variation>L</variation>
    <location>
        <position position="35"/>
    </location>
</feature>
<feature type="sequence variant">
    <original>LLR</original>
    <variation>RLK</variation>
    <location>
        <begin position="88"/>
        <end position="90"/>
    </location>
</feature>
<name>SAA_CANLF</name>
<keyword id="KW-0011">Acute phase</keyword>
<keyword id="KW-0034">Amyloid</keyword>
<keyword id="KW-0903">Direct protein sequencing</keyword>
<keyword id="KW-0345">HDL</keyword>
<keyword id="KW-0873">Pyrrolidone carboxylic acid</keyword>
<keyword id="KW-1185">Reference proteome</keyword>
<keyword id="KW-0964">Secreted</keyword>
<keyword id="KW-0732">Signal</keyword>
<sequence length="129" mass="14339">MKLFPGLLFCSLVLGVSGQWYSFVSEAAQGAWDMWRAYSDMREANYKNSDKYFHARGNYDAAQRGPGGAWAAKVISDARENSQRITDLLRFGDSGHGAEDSKADQAANEWGRSGKDPNHFRPAGLPDKY</sequence>
<organism>
    <name type="scientific">Canis lupus familiaris</name>
    <name type="common">Dog</name>
    <name type="synonym">Canis familiaris</name>
    <dbReference type="NCBI Taxonomy" id="9615"/>
    <lineage>
        <taxon>Eukaryota</taxon>
        <taxon>Metazoa</taxon>
        <taxon>Chordata</taxon>
        <taxon>Craniata</taxon>
        <taxon>Vertebrata</taxon>
        <taxon>Euteleostomi</taxon>
        <taxon>Mammalia</taxon>
        <taxon>Eutheria</taxon>
        <taxon>Laurasiatheria</taxon>
        <taxon>Carnivora</taxon>
        <taxon>Caniformia</taxon>
        <taxon>Canidae</taxon>
        <taxon>Canis</taxon>
    </lineage>
</organism>
<evidence type="ECO:0000250" key="1">
    <source>
        <dbReference type="UniProtKB" id="P42819"/>
    </source>
</evidence>
<evidence type="ECO:0000256" key="2">
    <source>
        <dbReference type="SAM" id="MobiDB-lite"/>
    </source>
</evidence>
<evidence type="ECO:0000269" key="3">
    <source>
    </source>
</evidence>
<evidence type="ECO:0000305" key="4"/>
<proteinExistence type="evidence at protein level"/>